<gene>
    <name evidence="1" type="primary">rpoA</name>
    <name type="ordered locus">LBA0317</name>
</gene>
<accession>Q5FM65</accession>
<protein>
    <recommendedName>
        <fullName evidence="1">DNA-directed RNA polymerase subunit alpha</fullName>
        <shortName evidence="1">RNAP subunit alpha</shortName>
        <ecNumber evidence="1">2.7.7.6</ecNumber>
    </recommendedName>
    <alternativeName>
        <fullName evidence="1">RNA polymerase subunit alpha</fullName>
    </alternativeName>
    <alternativeName>
        <fullName evidence="1">Transcriptase subunit alpha</fullName>
    </alternativeName>
</protein>
<dbReference type="EC" id="2.7.7.6" evidence="1"/>
<dbReference type="EMBL" id="CP000033">
    <property type="protein sequence ID" value="AAV42209.1"/>
    <property type="molecule type" value="Genomic_DNA"/>
</dbReference>
<dbReference type="RefSeq" id="WP_003549048.1">
    <property type="nucleotide sequence ID" value="NC_006814.3"/>
</dbReference>
<dbReference type="RefSeq" id="YP_193240.1">
    <property type="nucleotide sequence ID" value="NC_006814.3"/>
</dbReference>
<dbReference type="SMR" id="Q5FM65"/>
<dbReference type="STRING" id="272621.LBA0317"/>
<dbReference type="KEGG" id="lac:LBA0317"/>
<dbReference type="PATRIC" id="fig|272621.13.peg.303"/>
<dbReference type="eggNOG" id="COG0202">
    <property type="taxonomic scope" value="Bacteria"/>
</dbReference>
<dbReference type="HOGENOM" id="CLU_053084_0_1_9"/>
<dbReference type="OrthoDB" id="9805706at2"/>
<dbReference type="BioCyc" id="LACI272621:G1G49-311-MONOMER"/>
<dbReference type="Proteomes" id="UP000006381">
    <property type="component" value="Chromosome"/>
</dbReference>
<dbReference type="GO" id="GO:0005737">
    <property type="term" value="C:cytoplasm"/>
    <property type="evidence" value="ECO:0007669"/>
    <property type="project" value="UniProtKB-ARBA"/>
</dbReference>
<dbReference type="GO" id="GO:0000428">
    <property type="term" value="C:DNA-directed RNA polymerase complex"/>
    <property type="evidence" value="ECO:0007669"/>
    <property type="project" value="UniProtKB-KW"/>
</dbReference>
<dbReference type="GO" id="GO:0003677">
    <property type="term" value="F:DNA binding"/>
    <property type="evidence" value="ECO:0007669"/>
    <property type="project" value="UniProtKB-UniRule"/>
</dbReference>
<dbReference type="GO" id="GO:0003899">
    <property type="term" value="F:DNA-directed RNA polymerase activity"/>
    <property type="evidence" value="ECO:0007669"/>
    <property type="project" value="UniProtKB-UniRule"/>
</dbReference>
<dbReference type="GO" id="GO:0046983">
    <property type="term" value="F:protein dimerization activity"/>
    <property type="evidence" value="ECO:0007669"/>
    <property type="project" value="InterPro"/>
</dbReference>
<dbReference type="GO" id="GO:0006351">
    <property type="term" value="P:DNA-templated transcription"/>
    <property type="evidence" value="ECO:0007669"/>
    <property type="project" value="UniProtKB-UniRule"/>
</dbReference>
<dbReference type="CDD" id="cd06928">
    <property type="entry name" value="RNAP_alpha_NTD"/>
    <property type="match status" value="1"/>
</dbReference>
<dbReference type="FunFam" id="1.10.150.20:FF:000001">
    <property type="entry name" value="DNA-directed RNA polymerase subunit alpha"/>
    <property type="match status" value="1"/>
</dbReference>
<dbReference type="FunFam" id="2.170.120.12:FF:000001">
    <property type="entry name" value="DNA-directed RNA polymerase subunit alpha"/>
    <property type="match status" value="1"/>
</dbReference>
<dbReference type="Gene3D" id="1.10.150.20">
    <property type="entry name" value="5' to 3' exonuclease, C-terminal subdomain"/>
    <property type="match status" value="1"/>
</dbReference>
<dbReference type="Gene3D" id="2.170.120.12">
    <property type="entry name" value="DNA-directed RNA polymerase, insert domain"/>
    <property type="match status" value="1"/>
</dbReference>
<dbReference type="Gene3D" id="3.30.1360.10">
    <property type="entry name" value="RNA polymerase, RBP11-like subunit"/>
    <property type="match status" value="1"/>
</dbReference>
<dbReference type="HAMAP" id="MF_00059">
    <property type="entry name" value="RNApol_bact_RpoA"/>
    <property type="match status" value="1"/>
</dbReference>
<dbReference type="InterPro" id="IPR011262">
    <property type="entry name" value="DNA-dir_RNA_pol_insert"/>
</dbReference>
<dbReference type="InterPro" id="IPR011263">
    <property type="entry name" value="DNA-dir_RNA_pol_RpoA/D/Rpb3"/>
</dbReference>
<dbReference type="InterPro" id="IPR011773">
    <property type="entry name" value="DNA-dir_RpoA"/>
</dbReference>
<dbReference type="InterPro" id="IPR036603">
    <property type="entry name" value="RBP11-like"/>
</dbReference>
<dbReference type="InterPro" id="IPR011260">
    <property type="entry name" value="RNAP_asu_C"/>
</dbReference>
<dbReference type="InterPro" id="IPR036643">
    <property type="entry name" value="RNApol_insert_sf"/>
</dbReference>
<dbReference type="NCBIfam" id="NF003513">
    <property type="entry name" value="PRK05182.1-2"/>
    <property type="match status" value="1"/>
</dbReference>
<dbReference type="NCBIfam" id="NF003515">
    <property type="entry name" value="PRK05182.2-1"/>
    <property type="match status" value="1"/>
</dbReference>
<dbReference type="NCBIfam" id="NF003516">
    <property type="entry name" value="PRK05182.2-2"/>
    <property type="match status" value="1"/>
</dbReference>
<dbReference type="NCBIfam" id="NF003519">
    <property type="entry name" value="PRK05182.2-5"/>
    <property type="match status" value="1"/>
</dbReference>
<dbReference type="NCBIfam" id="TIGR02027">
    <property type="entry name" value="rpoA"/>
    <property type="match status" value="1"/>
</dbReference>
<dbReference type="Pfam" id="PF01000">
    <property type="entry name" value="RNA_pol_A_bac"/>
    <property type="match status" value="1"/>
</dbReference>
<dbReference type="Pfam" id="PF03118">
    <property type="entry name" value="RNA_pol_A_CTD"/>
    <property type="match status" value="1"/>
</dbReference>
<dbReference type="Pfam" id="PF01193">
    <property type="entry name" value="RNA_pol_L"/>
    <property type="match status" value="1"/>
</dbReference>
<dbReference type="SMART" id="SM00662">
    <property type="entry name" value="RPOLD"/>
    <property type="match status" value="1"/>
</dbReference>
<dbReference type="SUPFAM" id="SSF47789">
    <property type="entry name" value="C-terminal domain of RNA polymerase alpha subunit"/>
    <property type="match status" value="1"/>
</dbReference>
<dbReference type="SUPFAM" id="SSF56553">
    <property type="entry name" value="Insert subdomain of RNA polymerase alpha subunit"/>
    <property type="match status" value="1"/>
</dbReference>
<dbReference type="SUPFAM" id="SSF55257">
    <property type="entry name" value="RBP11-like subunits of RNA polymerase"/>
    <property type="match status" value="1"/>
</dbReference>
<reference key="1">
    <citation type="journal article" date="2005" name="Proc. Natl. Acad. Sci. U.S.A.">
        <title>Complete genome sequence of the probiotic lactic acid bacterium Lactobacillus acidophilus NCFM.</title>
        <authorList>
            <person name="Altermann E."/>
            <person name="Russell W.M."/>
            <person name="Azcarate-Peril M.A."/>
            <person name="Barrangou R."/>
            <person name="Buck B.L."/>
            <person name="McAuliffe O."/>
            <person name="Souther N."/>
            <person name="Dobson A."/>
            <person name="Duong T."/>
            <person name="Callanan M."/>
            <person name="Lick S."/>
            <person name="Hamrick A."/>
            <person name="Cano R."/>
            <person name="Klaenhammer T.R."/>
        </authorList>
    </citation>
    <scope>NUCLEOTIDE SEQUENCE [LARGE SCALE GENOMIC DNA]</scope>
    <source>
        <strain>ATCC 700396 / NCK56 / N2 / NCFM</strain>
    </source>
</reference>
<comment type="function">
    <text evidence="1">DNA-dependent RNA polymerase catalyzes the transcription of DNA into RNA using the four ribonucleoside triphosphates as substrates.</text>
</comment>
<comment type="catalytic activity">
    <reaction evidence="1">
        <text>RNA(n) + a ribonucleoside 5'-triphosphate = RNA(n+1) + diphosphate</text>
        <dbReference type="Rhea" id="RHEA:21248"/>
        <dbReference type="Rhea" id="RHEA-COMP:14527"/>
        <dbReference type="Rhea" id="RHEA-COMP:17342"/>
        <dbReference type="ChEBI" id="CHEBI:33019"/>
        <dbReference type="ChEBI" id="CHEBI:61557"/>
        <dbReference type="ChEBI" id="CHEBI:140395"/>
        <dbReference type="EC" id="2.7.7.6"/>
    </reaction>
</comment>
<comment type="subunit">
    <text evidence="1">Homodimer. The RNAP catalytic core consists of 2 alpha, 1 beta, 1 beta' and 1 omega subunit. When a sigma factor is associated with the core the holoenzyme is formed, which can initiate transcription.</text>
</comment>
<comment type="domain">
    <text evidence="1">The N-terminal domain is essential for RNAP assembly and basal transcription, whereas the C-terminal domain is involved in interaction with transcriptional regulators and with upstream promoter elements.</text>
</comment>
<comment type="similarity">
    <text evidence="1">Belongs to the RNA polymerase alpha chain family.</text>
</comment>
<keyword id="KW-0240">DNA-directed RNA polymerase</keyword>
<keyword id="KW-0548">Nucleotidyltransferase</keyword>
<keyword id="KW-1185">Reference proteome</keyword>
<keyword id="KW-0804">Transcription</keyword>
<keyword id="KW-0808">Transferase</keyword>
<feature type="chain" id="PRO_0000225278" description="DNA-directed RNA polymerase subunit alpha">
    <location>
        <begin position="1"/>
        <end position="312"/>
    </location>
</feature>
<feature type="region of interest" description="Alpha N-terminal domain (alpha-NTD)" evidence="1">
    <location>
        <begin position="1"/>
        <end position="226"/>
    </location>
</feature>
<feature type="region of interest" description="Alpha C-terminal domain (alpha-CTD)" evidence="1">
    <location>
        <begin position="243"/>
        <end position="312"/>
    </location>
</feature>
<sequence length="312" mass="34957">MIEFEKPNITVVEQEDSYGKFVVEPLERGFGTTLGNSLRRVLLTSIPGTGLVYVQIDGVLHEFSTVPGVREDVTKIILNLKKLELKSLSDEQKVIELDVEGPATVTADDLKVDADVQVLNPDQYICTIAEGGHLHMELAVKNGRGYVAASDNKSDDMPIGVIPVDSLFSPIKKVNYQVESTRVGKRDDFDKLTFEIWTDGSIKPNDALSFAAKILVEHFKVFESADANTKFSEVMVEKEDDKKEKKLEMTIEELDLSVRSYNCLKRAGINTLQELTDKTESDMMRVRNLGRKSLEEVKNKLTDLGLSLRQED</sequence>
<proteinExistence type="inferred from homology"/>
<name>RPOA_LACAC</name>
<evidence type="ECO:0000255" key="1">
    <source>
        <dbReference type="HAMAP-Rule" id="MF_00059"/>
    </source>
</evidence>
<organism>
    <name type="scientific">Lactobacillus acidophilus (strain ATCC 700396 / NCK56 / N2 / NCFM)</name>
    <dbReference type="NCBI Taxonomy" id="272621"/>
    <lineage>
        <taxon>Bacteria</taxon>
        <taxon>Bacillati</taxon>
        <taxon>Bacillota</taxon>
        <taxon>Bacilli</taxon>
        <taxon>Lactobacillales</taxon>
        <taxon>Lactobacillaceae</taxon>
        <taxon>Lactobacillus</taxon>
    </lineage>
</organism>